<evidence type="ECO:0000250" key="1"/>
<evidence type="ECO:0000255" key="2">
    <source>
        <dbReference type="HAMAP-Rule" id="MF_00619"/>
    </source>
</evidence>
<evidence type="ECO:0000305" key="3"/>
<organism>
    <name type="scientific">Mesostigma viride</name>
    <name type="common">Green alga</name>
    <dbReference type="NCBI Taxonomy" id="41882"/>
    <lineage>
        <taxon>Eukaryota</taxon>
        <taxon>Viridiplantae</taxon>
        <taxon>Streptophyta</taxon>
        <taxon>Mesostigmatophyceae</taxon>
        <taxon>Mesostigmatales</taxon>
        <taxon>Mesostigmataceae</taxon>
        <taxon>Mesostigma</taxon>
    </lineage>
</organism>
<gene>
    <name type="primary">ycf65</name>
</gene>
<reference key="1">
    <citation type="journal article" date="2000" name="Nature">
        <title>Ancestral chloroplast genome in Mesostigma viride reveals an early branch of green plant evolution.</title>
        <authorList>
            <person name="Lemieux C."/>
            <person name="Otis C."/>
            <person name="Turmel M."/>
        </authorList>
    </citation>
    <scope>NUCLEOTIDE SEQUENCE [LARGE SCALE GENOMIC DNA]</scope>
    <source>
        <strain>NIES-296 / KY-14 / CCMP 2046</strain>
    </source>
</reference>
<accession>Q9MUN2</accession>
<dbReference type="EMBL" id="AF166114">
    <property type="protein sequence ID" value="AAF43868.1"/>
    <property type="molecule type" value="Genomic_DNA"/>
</dbReference>
<dbReference type="RefSeq" id="NP_038428.1">
    <property type="nucleotide sequence ID" value="NC_002186.1"/>
</dbReference>
<dbReference type="SMR" id="Q9MUN2"/>
<dbReference type="GeneID" id="800951"/>
<dbReference type="GO" id="GO:0009507">
    <property type="term" value="C:chloroplast"/>
    <property type="evidence" value="ECO:0007669"/>
    <property type="project" value="UniProtKB-SubCell"/>
</dbReference>
<dbReference type="GO" id="GO:1990904">
    <property type="term" value="C:ribonucleoprotein complex"/>
    <property type="evidence" value="ECO:0007669"/>
    <property type="project" value="UniProtKB-KW"/>
</dbReference>
<dbReference type="GO" id="GO:0005840">
    <property type="term" value="C:ribosome"/>
    <property type="evidence" value="ECO:0007669"/>
    <property type="project" value="UniProtKB-KW"/>
</dbReference>
<dbReference type="GO" id="GO:0003735">
    <property type="term" value="F:structural constituent of ribosome"/>
    <property type="evidence" value="ECO:0007669"/>
    <property type="project" value="InterPro"/>
</dbReference>
<dbReference type="GO" id="GO:0006412">
    <property type="term" value="P:translation"/>
    <property type="evidence" value="ECO:0007669"/>
    <property type="project" value="UniProtKB-UniRule"/>
</dbReference>
<dbReference type="Gene3D" id="3.30.390.140">
    <property type="match status" value="1"/>
</dbReference>
<dbReference type="HAMAP" id="MF_00619">
    <property type="entry name" value="Ribosomal_plastid_cS23"/>
    <property type="match status" value="1"/>
</dbReference>
<dbReference type="InterPro" id="IPR038447">
    <property type="entry name" value="PSRP-3/Ycf65_sf"/>
</dbReference>
<dbReference type="InterPro" id="IPR006924">
    <property type="entry name" value="Ribosomal_PSRP3/Ycf65"/>
</dbReference>
<dbReference type="NCBIfam" id="NF002740">
    <property type="entry name" value="PRK02724.1"/>
    <property type="match status" value="1"/>
</dbReference>
<dbReference type="PANTHER" id="PTHR35108">
    <property type="entry name" value="30S RIBOSOMAL PROTEIN 3, CHLOROPLASTIC"/>
    <property type="match status" value="1"/>
</dbReference>
<dbReference type="PANTHER" id="PTHR35108:SF1">
    <property type="entry name" value="OS04G0461100 PROTEIN"/>
    <property type="match status" value="1"/>
</dbReference>
<dbReference type="Pfam" id="PF04839">
    <property type="entry name" value="PSRP-3_Ycf65"/>
    <property type="match status" value="1"/>
</dbReference>
<geneLocation type="chloroplast"/>
<comment type="function">
    <text evidence="1">Probably a ribosomal protein or a ribosome-associated protein.</text>
</comment>
<comment type="subunit">
    <text evidence="1">Part of the 30S ribosomal subunit.</text>
</comment>
<comment type="subcellular location">
    <subcellularLocation>
        <location>Plastid</location>
        <location>Chloroplast</location>
    </subcellularLocation>
</comment>
<comment type="similarity">
    <text evidence="3">Belongs to the chloroplast-specific ribosomal protein cS23 family.</text>
</comment>
<name>RRP3_MESVI</name>
<feature type="chain" id="PRO_0000216763" description="Small ribosomal subunit protein cS23">
    <location>
        <begin position="1"/>
        <end position="123"/>
    </location>
</feature>
<protein>
    <recommendedName>
        <fullName evidence="2">Small ribosomal subunit protein cS23</fullName>
    </recommendedName>
    <alternativeName>
        <fullName>30S ribosomal protein 3, chloroplastic</fullName>
        <shortName>PSRP-3</shortName>
    </alternativeName>
</protein>
<keyword id="KW-0150">Chloroplast</keyword>
<keyword id="KW-0934">Plastid</keyword>
<keyword id="KW-0687">Ribonucleoprotein</keyword>
<keyword id="KW-0689">Ribosomal protein</keyword>
<proteinExistence type="inferred from homology"/>
<sequence length="123" mass="14592">MNIFIKQNSSTVKRRYPLQKFVLKFLWLEKNLAVTVDQVTNRGNSPITEYFFWPRKDAWEELKDALANKPWISYDESIALLNQTTDVINYWQEDEKKPSLSEAQAKFPNCIFTDKFANCLYEN</sequence>